<sequence length="204" mass="24528">MMRTPITTHPLLLLLLLQQLLQPVQFQEVDTDFETPEDKMEEFREYLEEFRRTGPTRPPTKEKVERRVIIEPGMPLYHRDYCNEEIMRKNVYHKQRCVTEHYFLLMQYDELEKICYNRFVPCKNGVRKCNRSKGLVEGVYCNLTEAFKIPRCKYKSFYRRGYVLITCAWQNEIHKLIPHTINDLVEPPKHRSFLNEDGVFVIPP</sequence>
<name>RNAS9_MACNE</name>
<evidence type="ECO:0000250" key="1"/>
<evidence type="ECO:0000255" key="2"/>
<evidence type="ECO:0000305" key="3"/>
<keyword id="KW-1015">Disulfide bond</keyword>
<keyword id="KW-0325">Glycoprotein</keyword>
<keyword id="KW-1185">Reference proteome</keyword>
<keyword id="KW-0964">Secreted</keyword>
<keyword id="KW-0732">Signal</keyword>
<dbReference type="EMBL" id="AY330194">
    <property type="protein sequence ID" value="AAQ01504.1"/>
    <property type="molecule type" value="Genomic_DNA"/>
</dbReference>
<dbReference type="SMR" id="Q7YRH2"/>
<dbReference type="GlyCosmos" id="Q7YRH2">
    <property type="glycosylation" value="2 sites, No reported glycans"/>
</dbReference>
<dbReference type="Proteomes" id="UP000233120">
    <property type="component" value="Unassembled WGS sequence"/>
</dbReference>
<dbReference type="GO" id="GO:0005576">
    <property type="term" value="C:extracellular region"/>
    <property type="evidence" value="ECO:0007669"/>
    <property type="project" value="UniProtKB-SubCell"/>
</dbReference>
<dbReference type="GO" id="GO:0003676">
    <property type="term" value="F:nucleic acid binding"/>
    <property type="evidence" value="ECO:0007669"/>
    <property type="project" value="InterPro"/>
</dbReference>
<dbReference type="GO" id="GO:0050830">
    <property type="term" value="P:defense response to Gram-positive bacterium"/>
    <property type="evidence" value="ECO:0007669"/>
    <property type="project" value="TreeGrafter"/>
</dbReference>
<dbReference type="CDD" id="cd00163">
    <property type="entry name" value="RNase_A"/>
    <property type="match status" value="1"/>
</dbReference>
<dbReference type="FunFam" id="3.10.130.10:FF:000003">
    <property type="entry name" value="Inactive ribonuclease-like protein 9"/>
    <property type="match status" value="1"/>
</dbReference>
<dbReference type="Gene3D" id="3.10.130.10">
    <property type="entry name" value="Ribonuclease A-like domain"/>
    <property type="match status" value="1"/>
</dbReference>
<dbReference type="InterPro" id="IPR001427">
    <property type="entry name" value="RNaseA"/>
</dbReference>
<dbReference type="InterPro" id="IPR036816">
    <property type="entry name" value="RNaseA-like_dom_sf"/>
</dbReference>
<dbReference type="InterPro" id="IPR023412">
    <property type="entry name" value="RNaseA_domain"/>
</dbReference>
<dbReference type="PANTHER" id="PTHR11437:SF14">
    <property type="entry name" value="INACTIVE RIBONUCLEASE-LIKE PROTEIN 9"/>
    <property type="match status" value="1"/>
</dbReference>
<dbReference type="PANTHER" id="PTHR11437">
    <property type="entry name" value="RIBONUCLEASE"/>
    <property type="match status" value="1"/>
</dbReference>
<dbReference type="Pfam" id="PF00074">
    <property type="entry name" value="RnaseA"/>
    <property type="match status" value="1"/>
</dbReference>
<dbReference type="SMART" id="SM00092">
    <property type="entry name" value="RNAse_Pc"/>
    <property type="match status" value="1"/>
</dbReference>
<dbReference type="SUPFAM" id="SSF54076">
    <property type="entry name" value="RNase A-like"/>
    <property type="match status" value="1"/>
</dbReference>
<organism>
    <name type="scientific">Macaca nemestrina</name>
    <name type="common">Pig-tailed macaque</name>
    <dbReference type="NCBI Taxonomy" id="9545"/>
    <lineage>
        <taxon>Eukaryota</taxon>
        <taxon>Metazoa</taxon>
        <taxon>Chordata</taxon>
        <taxon>Craniata</taxon>
        <taxon>Vertebrata</taxon>
        <taxon>Euteleostomi</taxon>
        <taxon>Mammalia</taxon>
        <taxon>Eutheria</taxon>
        <taxon>Euarchontoglires</taxon>
        <taxon>Primates</taxon>
        <taxon>Haplorrhini</taxon>
        <taxon>Catarrhini</taxon>
        <taxon>Cercopithecidae</taxon>
        <taxon>Cercopithecinae</taxon>
        <taxon>Macaca</taxon>
    </lineage>
</organism>
<proteinExistence type="inferred from homology"/>
<protein>
    <recommendedName>
        <fullName>Inactive ribonuclease-like protein 9</fullName>
    </recommendedName>
</protein>
<feature type="signal peptide" evidence="2">
    <location>
        <begin position="1"/>
        <end position="26"/>
    </location>
</feature>
<feature type="chain" id="PRO_0000030955" description="Inactive ribonuclease-like protein 9">
    <location>
        <begin position="27"/>
        <end position="204"/>
    </location>
</feature>
<feature type="glycosylation site" description="N-linked (GlcNAc...) asparagine" evidence="2">
    <location>
        <position position="130"/>
    </location>
</feature>
<feature type="glycosylation site" description="N-linked (GlcNAc...) asparagine" evidence="2">
    <location>
        <position position="142"/>
    </location>
</feature>
<feature type="disulfide bond" evidence="1">
    <location>
        <begin position="97"/>
        <end position="152"/>
    </location>
</feature>
<feature type="disulfide bond" evidence="1">
    <location>
        <begin position="115"/>
        <end position="167"/>
    </location>
</feature>
<feature type="disulfide bond" evidence="1">
    <location>
        <begin position="122"/>
        <end position="129"/>
    </location>
</feature>
<comment type="function">
    <text evidence="1">Does not exhibit any ribonuclease activity.</text>
</comment>
<comment type="subcellular location">
    <subcellularLocation>
        <location evidence="3">Secreted</location>
    </subcellularLocation>
</comment>
<comment type="similarity">
    <text evidence="3">Belongs to the pancreatic ribonuclease family.</text>
</comment>
<reference key="1">
    <citation type="submission" date="2003-06" db="EMBL/GenBank/DDBJ databases">
        <title>LOC122650 on chromosome 14q11.2 is related to the RNase A superfamily and contains a unique amino-terminal pre-protein-like domain.</title>
        <authorList>
            <person name="Devor E.J."/>
            <person name="Moffat-Wilson K.A."/>
        </authorList>
    </citation>
    <scope>NUCLEOTIDE SEQUENCE [GENOMIC DNA]</scope>
</reference>
<accession>Q7YRH2</accession>
<gene>
    <name type="primary">RNASE9</name>
</gene>